<gene>
    <name type="ordered locus">At5g22700</name>
    <name type="ORF">MDJ22.12</name>
</gene>
<accession>Q9FNJ1</accession>
<accession>C0SVQ1</accession>
<organism>
    <name type="scientific">Arabidopsis thaliana</name>
    <name type="common">Mouse-ear cress</name>
    <dbReference type="NCBI Taxonomy" id="3702"/>
    <lineage>
        <taxon>Eukaryota</taxon>
        <taxon>Viridiplantae</taxon>
        <taxon>Streptophyta</taxon>
        <taxon>Embryophyta</taxon>
        <taxon>Tracheophyta</taxon>
        <taxon>Spermatophyta</taxon>
        <taxon>Magnoliopsida</taxon>
        <taxon>eudicotyledons</taxon>
        <taxon>Gunneridae</taxon>
        <taxon>Pentapetalae</taxon>
        <taxon>rosids</taxon>
        <taxon>malvids</taxon>
        <taxon>Brassicales</taxon>
        <taxon>Brassicaceae</taxon>
        <taxon>Camelineae</taxon>
        <taxon>Arabidopsis</taxon>
    </lineage>
</organism>
<comment type="sequence caution" evidence="2">
    <conflict type="erroneous gene model prediction">
        <sequence resource="EMBL-CDS" id="BAB11676"/>
    </conflict>
</comment>
<comment type="sequence caution" evidence="2">
    <conflict type="erroneous initiation">
        <sequence resource="EMBL-CDS" id="BAH30592"/>
    </conflict>
</comment>
<sequence>MSNRGDRISSLPDELLCQILSNLPTKNAVTTSILSTRWRSIWLSTPVLDIDIDAFDDATTFVSFASRFLEFSKDSCLHKFKLSVERDDVDMCTIMPWIQDAVNRRIQHLEVDCRFSFHFEAVYLTLYLSETLVSLRLHFVTLHRYEFVSLPNLKVMHLEENIYYCLETLENFISSCPVLEDLTVVRIVDIITEKILRVRSRSLNSLKLVLDSSNGWFIDDIDEWKVIIDAPRLAYLSLKDDQSASFVISNLGSSAKADIKVSFNVNDIWDLPVTFERSNVGKLLTGLSSIRDLTISGTTLMIICHYLKHEPMPQFCNMVRLNARFYDCDLEMLPCVLESCPNLKSLVLGLLSSAETEQQSRVSSVPPCFLSSLEFVEIRSRLCRKRYVMKVARYFAKNSVMLKKFVYVGRVSIQEEDLLALLWRYSICEIEVRGLRR</sequence>
<protein>
    <recommendedName>
        <fullName>F-box/FBD/LRR-repeat protein At5g22700</fullName>
    </recommendedName>
</protein>
<proteinExistence type="evidence at transcript level"/>
<feature type="chain" id="PRO_0000281979" description="F-box/FBD/LRR-repeat protein At5g22700">
    <location>
        <begin position="1"/>
        <end position="437"/>
    </location>
</feature>
<feature type="domain" description="F-box" evidence="1">
    <location>
        <begin position="5"/>
        <end position="51"/>
    </location>
</feature>
<feature type="repeat" description="LRR 1">
    <location>
        <begin position="86"/>
        <end position="113"/>
    </location>
</feature>
<feature type="repeat" description="LRR 2">
    <location>
        <begin position="134"/>
        <end position="160"/>
    </location>
</feature>
<feature type="repeat" description="LRR 3">
    <location>
        <begin position="161"/>
        <end position="186"/>
    </location>
</feature>
<feature type="repeat" description="LRR 4">
    <location>
        <begin position="187"/>
        <end position="210"/>
    </location>
</feature>
<feature type="repeat" description="LRR 5">
    <location>
        <begin position="215"/>
        <end position="240"/>
    </location>
</feature>
<feature type="repeat" description="LRR 6">
    <location>
        <begin position="272"/>
        <end position="297"/>
    </location>
</feature>
<feature type="repeat" description="LRR 7">
    <location>
        <begin position="322"/>
        <end position="350"/>
    </location>
</feature>
<feature type="domain" description="FBD">
    <location>
        <begin position="361"/>
        <end position="406"/>
    </location>
</feature>
<reference key="1">
    <citation type="journal article" date="1997" name="DNA Res.">
        <title>Structural analysis of Arabidopsis thaliana chromosome 5. II. Sequence features of the regions of 1,044,062 bp covered by thirteen physically assigned P1 clones.</title>
        <authorList>
            <person name="Kotani H."/>
            <person name="Nakamura Y."/>
            <person name="Sato S."/>
            <person name="Kaneko T."/>
            <person name="Asamizu E."/>
            <person name="Miyajima N."/>
            <person name="Tabata S."/>
        </authorList>
    </citation>
    <scope>NUCLEOTIDE SEQUENCE [LARGE SCALE GENOMIC DNA]</scope>
    <source>
        <strain>cv. Columbia</strain>
    </source>
</reference>
<reference key="2">
    <citation type="journal article" date="2017" name="Plant J.">
        <title>Araport11: a complete reannotation of the Arabidopsis thaliana reference genome.</title>
        <authorList>
            <person name="Cheng C.Y."/>
            <person name="Krishnakumar V."/>
            <person name="Chan A.P."/>
            <person name="Thibaud-Nissen F."/>
            <person name="Schobel S."/>
            <person name="Town C.D."/>
        </authorList>
    </citation>
    <scope>GENOME REANNOTATION</scope>
    <source>
        <strain>cv. Columbia</strain>
    </source>
</reference>
<reference key="3">
    <citation type="submission" date="2009-03" db="EMBL/GenBank/DDBJ databases">
        <title>ORF cloning and analysis of Arabidopsis transcription factor genes.</title>
        <authorList>
            <person name="Fujita M."/>
            <person name="Mizukado S."/>
            <person name="Seki M."/>
            <person name="Shinozaki K."/>
            <person name="Mitsuda N."/>
            <person name="Takiguchi Y."/>
            <person name="Takagi M."/>
        </authorList>
    </citation>
    <scope>NUCLEOTIDE SEQUENCE [LARGE SCALE MRNA]</scope>
</reference>
<evidence type="ECO:0000255" key="1">
    <source>
        <dbReference type="PROSITE-ProRule" id="PRU00080"/>
    </source>
</evidence>
<evidence type="ECO:0000305" key="2"/>
<keyword id="KW-0433">Leucine-rich repeat</keyword>
<keyword id="KW-1185">Reference proteome</keyword>
<keyword id="KW-0677">Repeat</keyword>
<name>FDL47_ARATH</name>
<dbReference type="EMBL" id="AB006699">
    <property type="protein sequence ID" value="BAB11676.1"/>
    <property type="status" value="ALT_SEQ"/>
    <property type="molecule type" value="Genomic_DNA"/>
</dbReference>
<dbReference type="EMBL" id="CP002688">
    <property type="protein sequence ID" value="AED93065.1"/>
    <property type="molecule type" value="Genomic_DNA"/>
</dbReference>
<dbReference type="EMBL" id="CP002688">
    <property type="protein sequence ID" value="ANM71010.1"/>
    <property type="molecule type" value="Genomic_DNA"/>
</dbReference>
<dbReference type="EMBL" id="CP002688">
    <property type="protein sequence ID" value="ANM71012.1"/>
    <property type="molecule type" value="Genomic_DNA"/>
</dbReference>
<dbReference type="EMBL" id="CP002688">
    <property type="protein sequence ID" value="ANM71013.1"/>
    <property type="molecule type" value="Genomic_DNA"/>
</dbReference>
<dbReference type="EMBL" id="AB493754">
    <property type="protein sequence ID" value="BAH30592.1"/>
    <property type="status" value="ALT_INIT"/>
    <property type="molecule type" value="mRNA"/>
</dbReference>
<dbReference type="RefSeq" id="NP_001318621.1">
    <property type="nucleotide sequence ID" value="NM_001343750.1"/>
</dbReference>
<dbReference type="RefSeq" id="NP_001332571.1">
    <property type="nucleotide sequence ID" value="NM_001343753.1"/>
</dbReference>
<dbReference type="RefSeq" id="NP_001332573.1">
    <property type="nucleotide sequence ID" value="NM_001343752.1"/>
</dbReference>
<dbReference type="RefSeq" id="NP_001332574.1">
    <property type="nucleotide sequence ID" value="NM_001343751.1"/>
</dbReference>
<dbReference type="FunCoup" id="Q9FNJ1">
    <property type="interactions" value="967"/>
</dbReference>
<dbReference type="iPTMnet" id="Q9FNJ1"/>
<dbReference type="PaxDb" id="3702-AT5G22700.1"/>
<dbReference type="EnsemblPlants" id="AT5G22700.1">
    <property type="protein sequence ID" value="AT5G22700.1"/>
    <property type="gene ID" value="AT5G22700"/>
</dbReference>
<dbReference type="EnsemblPlants" id="AT5G22700.2">
    <property type="protein sequence ID" value="AT5G22700.2"/>
    <property type="gene ID" value="AT5G22700"/>
</dbReference>
<dbReference type="EnsemblPlants" id="AT5G22700.3">
    <property type="protein sequence ID" value="AT5G22700.3"/>
    <property type="gene ID" value="AT5G22700"/>
</dbReference>
<dbReference type="EnsemblPlants" id="AT5G22700.4">
    <property type="protein sequence ID" value="AT5G22700.4"/>
    <property type="gene ID" value="AT5G22700"/>
</dbReference>
<dbReference type="GeneID" id="832335"/>
<dbReference type="Gramene" id="AT5G22700.1">
    <property type="protein sequence ID" value="AT5G22700.1"/>
    <property type="gene ID" value="AT5G22700"/>
</dbReference>
<dbReference type="Gramene" id="AT5G22700.2">
    <property type="protein sequence ID" value="AT5G22700.2"/>
    <property type="gene ID" value="AT5G22700"/>
</dbReference>
<dbReference type="Gramene" id="AT5G22700.3">
    <property type="protein sequence ID" value="AT5G22700.3"/>
    <property type="gene ID" value="AT5G22700"/>
</dbReference>
<dbReference type="Gramene" id="AT5G22700.4">
    <property type="protein sequence ID" value="AT5G22700.4"/>
    <property type="gene ID" value="AT5G22700"/>
</dbReference>
<dbReference type="KEGG" id="ath:AT5G22700"/>
<dbReference type="Araport" id="AT5G22700"/>
<dbReference type="TAIR" id="AT5G22700"/>
<dbReference type="eggNOG" id="ENOG502T0EG">
    <property type="taxonomic scope" value="Eukaryota"/>
</dbReference>
<dbReference type="HOGENOM" id="CLU_010721_1_3_1"/>
<dbReference type="InParanoid" id="Q9FNJ1"/>
<dbReference type="PhylomeDB" id="Q9FNJ1"/>
<dbReference type="PRO" id="PR:Q9FNJ1"/>
<dbReference type="Proteomes" id="UP000006548">
    <property type="component" value="Chromosome 5"/>
</dbReference>
<dbReference type="ExpressionAtlas" id="Q9FNJ1">
    <property type="expression patterns" value="baseline and differential"/>
</dbReference>
<dbReference type="CDD" id="cd22160">
    <property type="entry name" value="F-box_AtFBL13-like"/>
    <property type="match status" value="1"/>
</dbReference>
<dbReference type="Gene3D" id="1.20.1280.50">
    <property type="match status" value="1"/>
</dbReference>
<dbReference type="Gene3D" id="3.80.10.10">
    <property type="entry name" value="Ribonuclease Inhibitor"/>
    <property type="match status" value="1"/>
</dbReference>
<dbReference type="InterPro" id="IPR036047">
    <property type="entry name" value="F-box-like_dom_sf"/>
</dbReference>
<dbReference type="InterPro" id="IPR053781">
    <property type="entry name" value="F-box_AtFBL13-like"/>
</dbReference>
<dbReference type="InterPro" id="IPR001810">
    <property type="entry name" value="F-box_dom"/>
</dbReference>
<dbReference type="InterPro" id="IPR006566">
    <property type="entry name" value="FBD"/>
</dbReference>
<dbReference type="InterPro" id="IPR050232">
    <property type="entry name" value="FBL13/AtMIF1-like"/>
</dbReference>
<dbReference type="InterPro" id="IPR032675">
    <property type="entry name" value="LRR_dom_sf"/>
</dbReference>
<dbReference type="InterPro" id="IPR055411">
    <property type="entry name" value="LRR_FXL15/At3g58940/PEG3-like"/>
</dbReference>
<dbReference type="PANTHER" id="PTHR31900">
    <property type="entry name" value="F-BOX/RNI SUPERFAMILY PROTEIN-RELATED"/>
    <property type="match status" value="1"/>
</dbReference>
<dbReference type="PANTHER" id="PTHR31900:SF25">
    <property type="entry name" value="FBD DOMAIN-CONTAINING PROTEIN"/>
    <property type="match status" value="1"/>
</dbReference>
<dbReference type="Pfam" id="PF00646">
    <property type="entry name" value="F-box"/>
    <property type="match status" value="1"/>
</dbReference>
<dbReference type="Pfam" id="PF08387">
    <property type="entry name" value="FBD"/>
    <property type="match status" value="1"/>
</dbReference>
<dbReference type="Pfam" id="PF24758">
    <property type="entry name" value="LRR_At5g56370"/>
    <property type="match status" value="1"/>
</dbReference>
<dbReference type="SMART" id="SM00579">
    <property type="entry name" value="FBD"/>
    <property type="match status" value="1"/>
</dbReference>
<dbReference type="SMART" id="SM00256">
    <property type="entry name" value="FBOX"/>
    <property type="match status" value="1"/>
</dbReference>
<dbReference type="SUPFAM" id="SSF81383">
    <property type="entry name" value="F-box domain"/>
    <property type="match status" value="1"/>
</dbReference>
<dbReference type="SUPFAM" id="SSF52058">
    <property type="entry name" value="L domain-like"/>
    <property type="match status" value="1"/>
</dbReference>
<dbReference type="PROSITE" id="PS50181">
    <property type="entry name" value="FBOX"/>
    <property type="match status" value="1"/>
</dbReference>